<keyword id="KW-0030">Aminoacyl-tRNA synthetase</keyword>
<keyword id="KW-0067">ATP-binding</keyword>
<keyword id="KW-0963">Cytoplasm</keyword>
<keyword id="KW-0436">Ligase</keyword>
<keyword id="KW-0479">Metal-binding</keyword>
<keyword id="KW-0547">Nucleotide-binding</keyword>
<keyword id="KW-0648">Protein biosynthesis</keyword>
<keyword id="KW-0862">Zinc</keyword>
<comment type="function">
    <text evidence="1">Catalyzes the attachment of isoleucine to tRNA(Ile). As IleRS can inadvertently accommodate and process structurally similar amino acids such as valine, to avoid such errors it has two additional distinct tRNA(Ile)-dependent editing activities. One activity is designated as 'pretransfer' editing and involves the hydrolysis of activated Val-AMP. The other activity is designated 'posttransfer' editing and involves deacylation of mischarged Val-tRNA(Ile).</text>
</comment>
<comment type="catalytic activity">
    <reaction evidence="1">
        <text>tRNA(Ile) + L-isoleucine + ATP = L-isoleucyl-tRNA(Ile) + AMP + diphosphate</text>
        <dbReference type="Rhea" id="RHEA:11060"/>
        <dbReference type="Rhea" id="RHEA-COMP:9666"/>
        <dbReference type="Rhea" id="RHEA-COMP:9695"/>
        <dbReference type="ChEBI" id="CHEBI:30616"/>
        <dbReference type="ChEBI" id="CHEBI:33019"/>
        <dbReference type="ChEBI" id="CHEBI:58045"/>
        <dbReference type="ChEBI" id="CHEBI:78442"/>
        <dbReference type="ChEBI" id="CHEBI:78528"/>
        <dbReference type="ChEBI" id="CHEBI:456215"/>
        <dbReference type="EC" id="6.1.1.5"/>
    </reaction>
</comment>
<comment type="cofactor">
    <cofactor evidence="1">
        <name>Zn(2+)</name>
        <dbReference type="ChEBI" id="CHEBI:29105"/>
    </cofactor>
    <text evidence="1">Binds 1 zinc ion per subunit.</text>
</comment>
<comment type="subunit">
    <text evidence="1">Monomer.</text>
</comment>
<comment type="subcellular location">
    <subcellularLocation>
        <location evidence="1">Cytoplasm</location>
    </subcellularLocation>
</comment>
<comment type="domain">
    <text evidence="1">IleRS has two distinct active sites: one for aminoacylation and one for editing. The misactivated valine is translocated from the active site to the editing site, which sterically excludes the correctly activated isoleucine. The single editing site contains two valyl binding pockets, one specific for each substrate (Val-AMP or Val-tRNA(Ile)).</text>
</comment>
<comment type="similarity">
    <text evidence="1">Belongs to the class-I aminoacyl-tRNA synthetase family. IleS type 1 subfamily.</text>
</comment>
<evidence type="ECO:0000255" key="1">
    <source>
        <dbReference type="HAMAP-Rule" id="MF_02002"/>
    </source>
</evidence>
<dbReference type="EC" id="6.1.1.5" evidence="1"/>
<dbReference type="EMBL" id="CP000472">
    <property type="protein sequence ID" value="ACJ30411.1"/>
    <property type="molecule type" value="Genomic_DNA"/>
</dbReference>
<dbReference type="RefSeq" id="WP_020913755.1">
    <property type="nucleotide sequence ID" value="NC_011566.1"/>
</dbReference>
<dbReference type="SMR" id="B8CSC1"/>
<dbReference type="STRING" id="225849.swp_3728"/>
<dbReference type="KEGG" id="swp:swp_3728"/>
<dbReference type="eggNOG" id="COG0060">
    <property type="taxonomic scope" value="Bacteria"/>
</dbReference>
<dbReference type="HOGENOM" id="CLU_001493_7_1_6"/>
<dbReference type="OrthoDB" id="9810365at2"/>
<dbReference type="Proteomes" id="UP000000753">
    <property type="component" value="Chromosome"/>
</dbReference>
<dbReference type="GO" id="GO:0005829">
    <property type="term" value="C:cytosol"/>
    <property type="evidence" value="ECO:0007669"/>
    <property type="project" value="TreeGrafter"/>
</dbReference>
<dbReference type="GO" id="GO:0002161">
    <property type="term" value="F:aminoacyl-tRNA deacylase activity"/>
    <property type="evidence" value="ECO:0007669"/>
    <property type="project" value="InterPro"/>
</dbReference>
<dbReference type="GO" id="GO:0005524">
    <property type="term" value="F:ATP binding"/>
    <property type="evidence" value="ECO:0007669"/>
    <property type="project" value="UniProtKB-UniRule"/>
</dbReference>
<dbReference type="GO" id="GO:0004822">
    <property type="term" value="F:isoleucine-tRNA ligase activity"/>
    <property type="evidence" value="ECO:0007669"/>
    <property type="project" value="UniProtKB-UniRule"/>
</dbReference>
<dbReference type="GO" id="GO:0000049">
    <property type="term" value="F:tRNA binding"/>
    <property type="evidence" value="ECO:0007669"/>
    <property type="project" value="InterPro"/>
</dbReference>
<dbReference type="GO" id="GO:0008270">
    <property type="term" value="F:zinc ion binding"/>
    <property type="evidence" value="ECO:0007669"/>
    <property type="project" value="UniProtKB-UniRule"/>
</dbReference>
<dbReference type="GO" id="GO:0006428">
    <property type="term" value="P:isoleucyl-tRNA aminoacylation"/>
    <property type="evidence" value="ECO:0007669"/>
    <property type="project" value="UniProtKB-UniRule"/>
</dbReference>
<dbReference type="CDD" id="cd07960">
    <property type="entry name" value="Anticodon_Ia_Ile_BEm"/>
    <property type="match status" value="1"/>
</dbReference>
<dbReference type="CDD" id="cd00818">
    <property type="entry name" value="IleRS_core"/>
    <property type="match status" value="1"/>
</dbReference>
<dbReference type="FunFam" id="1.10.730.20:FF:000001">
    <property type="entry name" value="Isoleucine--tRNA ligase"/>
    <property type="match status" value="1"/>
</dbReference>
<dbReference type="FunFam" id="3.40.50.620:FF:000042">
    <property type="entry name" value="Isoleucine--tRNA ligase"/>
    <property type="match status" value="1"/>
</dbReference>
<dbReference type="FunFam" id="3.40.50.620:FF:000048">
    <property type="entry name" value="Isoleucine--tRNA ligase"/>
    <property type="match status" value="1"/>
</dbReference>
<dbReference type="Gene3D" id="1.10.730.20">
    <property type="match status" value="1"/>
</dbReference>
<dbReference type="Gene3D" id="3.40.50.620">
    <property type="entry name" value="HUPs"/>
    <property type="match status" value="2"/>
</dbReference>
<dbReference type="HAMAP" id="MF_02002">
    <property type="entry name" value="Ile_tRNA_synth_type1"/>
    <property type="match status" value="1"/>
</dbReference>
<dbReference type="InterPro" id="IPR001412">
    <property type="entry name" value="aa-tRNA-synth_I_CS"/>
</dbReference>
<dbReference type="InterPro" id="IPR002300">
    <property type="entry name" value="aa-tRNA-synth_Ia"/>
</dbReference>
<dbReference type="InterPro" id="IPR033708">
    <property type="entry name" value="Anticodon_Ile_BEm"/>
</dbReference>
<dbReference type="InterPro" id="IPR002301">
    <property type="entry name" value="Ile-tRNA-ligase"/>
</dbReference>
<dbReference type="InterPro" id="IPR023585">
    <property type="entry name" value="Ile-tRNA-ligase_type1"/>
</dbReference>
<dbReference type="InterPro" id="IPR050081">
    <property type="entry name" value="Ile-tRNA_ligase"/>
</dbReference>
<dbReference type="InterPro" id="IPR013155">
    <property type="entry name" value="M/V/L/I-tRNA-synth_anticd-bd"/>
</dbReference>
<dbReference type="InterPro" id="IPR014729">
    <property type="entry name" value="Rossmann-like_a/b/a_fold"/>
</dbReference>
<dbReference type="InterPro" id="IPR009080">
    <property type="entry name" value="tRNAsynth_Ia_anticodon-bd"/>
</dbReference>
<dbReference type="InterPro" id="IPR009008">
    <property type="entry name" value="Val/Leu/Ile-tRNA-synth_edit"/>
</dbReference>
<dbReference type="InterPro" id="IPR010663">
    <property type="entry name" value="Znf_FPG/IleRS"/>
</dbReference>
<dbReference type="NCBIfam" id="TIGR00392">
    <property type="entry name" value="ileS"/>
    <property type="match status" value="1"/>
</dbReference>
<dbReference type="PANTHER" id="PTHR42765:SF1">
    <property type="entry name" value="ISOLEUCINE--TRNA LIGASE, MITOCHONDRIAL"/>
    <property type="match status" value="1"/>
</dbReference>
<dbReference type="PANTHER" id="PTHR42765">
    <property type="entry name" value="SOLEUCYL-TRNA SYNTHETASE"/>
    <property type="match status" value="1"/>
</dbReference>
<dbReference type="Pfam" id="PF08264">
    <property type="entry name" value="Anticodon_1"/>
    <property type="match status" value="1"/>
</dbReference>
<dbReference type="Pfam" id="PF00133">
    <property type="entry name" value="tRNA-synt_1"/>
    <property type="match status" value="1"/>
</dbReference>
<dbReference type="Pfam" id="PF06827">
    <property type="entry name" value="zf-FPG_IleRS"/>
    <property type="match status" value="1"/>
</dbReference>
<dbReference type="PRINTS" id="PR00984">
    <property type="entry name" value="TRNASYNTHILE"/>
</dbReference>
<dbReference type="SUPFAM" id="SSF47323">
    <property type="entry name" value="Anticodon-binding domain of a subclass of class I aminoacyl-tRNA synthetases"/>
    <property type="match status" value="1"/>
</dbReference>
<dbReference type="SUPFAM" id="SSF52374">
    <property type="entry name" value="Nucleotidylyl transferase"/>
    <property type="match status" value="1"/>
</dbReference>
<dbReference type="SUPFAM" id="SSF50677">
    <property type="entry name" value="ValRS/IleRS/LeuRS editing domain"/>
    <property type="match status" value="1"/>
</dbReference>
<dbReference type="PROSITE" id="PS00178">
    <property type="entry name" value="AA_TRNA_LIGASE_I"/>
    <property type="match status" value="1"/>
</dbReference>
<organism>
    <name type="scientific">Shewanella piezotolerans (strain WP3 / JCM 13877)</name>
    <dbReference type="NCBI Taxonomy" id="225849"/>
    <lineage>
        <taxon>Bacteria</taxon>
        <taxon>Pseudomonadati</taxon>
        <taxon>Pseudomonadota</taxon>
        <taxon>Gammaproteobacteria</taxon>
        <taxon>Alteromonadales</taxon>
        <taxon>Shewanellaceae</taxon>
        <taxon>Shewanella</taxon>
    </lineage>
</organism>
<protein>
    <recommendedName>
        <fullName evidence="1">Isoleucine--tRNA ligase</fullName>
        <ecNumber evidence="1">6.1.1.5</ecNumber>
    </recommendedName>
    <alternativeName>
        <fullName evidence="1">Isoleucyl-tRNA synthetase</fullName>
        <shortName evidence="1">IleRS</shortName>
    </alternativeName>
</protein>
<reference key="1">
    <citation type="journal article" date="2008" name="PLoS ONE">
        <title>Environmental adaptation: genomic analysis of the piezotolerant and psychrotolerant deep-sea iron reducing bacterium Shewanella piezotolerans WP3.</title>
        <authorList>
            <person name="Wang F."/>
            <person name="Wang J."/>
            <person name="Jian H."/>
            <person name="Zhang B."/>
            <person name="Li S."/>
            <person name="Wang F."/>
            <person name="Zeng X."/>
            <person name="Gao L."/>
            <person name="Bartlett D.H."/>
            <person name="Yu J."/>
            <person name="Hu S."/>
            <person name="Xiao X."/>
        </authorList>
    </citation>
    <scope>NUCLEOTIDE SEQUENCE [LARGE SCALE GENOMIC DNA]</scope>
    <source>
        <strain>WP3 / JCM 13877</strain>
    </source>
</reference>
<proteinExistence type="inferred from homology"/>
<sequence>MSDYKSTLNLPETEFPMRGNLANREPEMLKSWNEKGLYQQIRESRKDSKPFILHDGPPYANGDIHIGHSVNKILKDIIIKSKTMSGFDAPYIPGWDCHGLPIELKVEQKVGKPGHKVTASEFRQKCREYAAKQVDGQRDDFIRLGVFADWQNPYLTMDYNTEANIVRSLSKVIDSGHLHKGVKPVHWCTDCGSALAEAEVEYEDKMSPAIDVAFTAVDKPALLAKFGLTEYAHPISMVIWTTTPWTLPANRALSVAGQLEYTLVEMVKDGQTQALVLAQELVESCVERFGAETHKVLANVLGSELELLRFNHPFYDFDVPVILGEHVTVESGTGVVHTAPGHGQDDFVVGQKYGLEVANPVGDNGVYKADTEIFAGQHVFKANKAVVALLEEKGALLNHVAINHSYPHCWRHKTPIIFRATPQWFISMDQKGLRTQALSEIEKTQWIPDWGQSRIEKMVENRPDWCISRQRTWGVPITLFVHRETEELHPDSVSLMERVANRIEQEGIQAWWDLDAAELLGDEAEQYRKVTDTLDVWYDSGSTFSSVVASRPEFNGHEVDLYLEGSDQHRGWFMSSLMISTAMNGKAPYKQVLTHGFTVDGKGRKMSKSVGNVIAPQHVTNKLGADILRLWVAATDYSGEMTVSDEILKRSADAYRRIRNTARFLLANINGFNPETDMVAVEDMVALDRWVVRRAAALQQELLEAYDQYNFHLVTQKLMQFCSVELGSFYLDIIKDRQYTAKDDSNARRSCQSALYLISEAMVRWIAPVLSFTADEIWKLLPGERGEFVFTETWYEGLQSVTLDSDLSDEFWEQLLTVRAEVNKVIENARREKQIGGSLEAEIMLFADEALSTALSTLGDELRFVLLTSKTDVVALSEAPADAIETELASLKLGLKKSEAEKCERCWHHREEVGQVAEHPTLCTRCVTNIEGEGETRQFA</sequence>
<feature type="chain" id="PRO_1000189195" description="Isoleucine--tRNA ligase">
    <location>
        <begin position="1"/>
        <end position="940"/>
    </location>
</feature>
<feature type="short sequence motif" description="'HIGH' region">
    <location>
        <begin position="58"/>
        <end position="68"/>
    </location>
</feature>
<feature type="short sequence motif" description="'KMSKS' region">
    <location>
        <begin position="605"/>
        <end position="609"/>
    </location>
</feature>
<feature type="binding site" evidence="1">
    <location>
        <position position="564"/>
    </location>
    <ligand>
        <name>L-isoleucyl-5'-AMP</name>
        <dbReference type="ChEBI" id="CHEBI:178002"/>
    </ligand>
</feature>
<feature type="binding site" evidence="1">
    <location>
        <position position="608"/>
    </location>
    <ligand>
        <name>ATP</name>
        <dbReference type="ChEBI" id="CHEBI:30616"/>
    </ligand>
</feature>
<feature type="binding site" evidence="1">
    <location>
        <position position="903"/>
    </location>
    <ligand>
        <name>Zn(2+)</name>
        <dbReference type="ChEBI" id="CHEBI:29105"/>
    </ligand>
</feature>
<feature type="binding site" evidence="1">
    <location>
        <position position="906"/>
    </location>
    <ligand>
        <name>Zn(2+)</name>
        <dbReference type="ChEBI" id="CHEBI:29105"/>
    </ligand>
</feature>
<feature type="binding site" evidence="1">
    <location>
        <position position="923"/>
    </location>
    <ligand>
        <name>Zn(2+)</name>
        <dbReference type="ChEBI" id="CHEBI:29105"/>
    </ligand>
</feature>
<feature type="binding site" evidence="1">
    <location>
        <position position="926"/>
    </location>
    <ligand>
        <name>Zn(2+)</name>
        <dbReference type="ChEBI" id="CHEBI:29105"/>
    </ligand>
</feature>
<accession>B8CSC1</accession>
<name>SYI_SHEPW</name>
<gene>
    <name evidence="1" type="primary">ileS</name>
    <name type="ordered locus">swp_3728</name>
</gene>